<comment type="function">
    <text evidence="1">Specifically methylates the guanine in position 1207 of 16S rRNA in the 30S particle.</text>
</comment>
<comment type="catalytic activity">
    <reaction evidence="1">
        <text>guanosine(1207) in 16S rRNA + S-adenosyl-L-methionine = N(2)-methylguanosine(1207) in 16S rRNA + S-adenosyl-L-homocysteine + H(+)</text>
        <dbReference type="Rhea" id="RHEA:42736"/>
        <dbReference type="Rhea" id="RHEA-COMP:10213"/>
        <dbReference type="Rhea" id="RHEA-COMP:10214"/>
        <dbReference type="ChEBI" id="CHEBI:15378"/>
        <dbReference type="ChEBI" id="CHEBI:57856"/>
        <dbReference type="ChEBI" id="CHEBI:59789"/>
        <dbReference type="ChEBI" id="CHEBI:74269"/>
        <dbReference type="ChEBI" id="CHEBI:74481"/>
        <dbReference type="EC" id="2.1.1.172"/>
    </reaction>
</comment>
<comment type="subunit">
    <text evidence="1">Monomer.</text>
</comment>
<comment type="subcellular location">
    <subcellularLocation>
        <location evidence="1">Cytoplasm</location>
    </subcellularLocation>
</comment>
<comment type="similarity">
    <text evidence="1">Belongs to the methyltransferase superfamily. RsmC family.</text>
</comment>
<proteinExistence type="inferred from homology"/>
<reference key="1">
    <citation type="journal article" date="2008" name="J. Bacteriol.">
        <title>The complete genome sequence of Actinobacillus pleuropneumoniae L20 (serotype 5b).</title>
        <authorList>
            <person name="Foote S.J."/>
            <person name="Bosse J.T."/>
            <person name="Bouevitch A.B."/>
            <person name="Langford P.R."/>
            <person name="Young N.M."/>
            <person name="Nash J.H.E."/>
        </authorList>
    </citation>
    <scope>NUCLEOTIDE SEQUENCE [LARGE SCALE GENOMIC DNA]</scope>
    <source>
        <strain>L20</strain>
    </source>
</reference>
<accession>A3N3U3</accession>
<dbReference type="EC" id="2.1.1.172" evidence="1"/>
<dbReference type="EMBL" id="CP000569">
    <property type="protein sequence ID" value="ABN75079.1"/>
    <property type="molecule type" value="Genomic_DNA"/>
</dbReference>
<dbReference type="RefSeq" id="WP_009875469.1">
    <property type="nucleotide sequence ID" value="NC_009053.1"/>
</dbReference>
<dbReference type="SMR" id="A3N3U3"/>
<dbReference type="STRING" id="416269.APL_2005"/>
<dbReference type="EnsemblBacteria" id="ABN75079">
    <property type="protein sequence ID" value="ABN75079"/>
    <property type="gene ID" value="APL_2005"/>
</dbReference>
<dbReference type="KEGG" id="apl:APL_2005"/>
<dbReference type="PATRIC" id="fig|416269.6.peg.2088"/>
<dbReference type="eggNOG" id="COG2813">
    <property type="taxonomic scope" value="Bacteria"/>
</dbReference>
<dbReference type="HOGENOM" id="CLU_049581_0_1_6"/>
<dbReference type="Proteomes" id="UP000001432">
    <property type="component" value="Chromosome"/>
</dbReference>
<dbReference type="GO" id="GO:0005737">
    <property type="term" value="C:cytoplasm"/>
    <property type="evidence" value="ECO:0007669"/>
    <property type="project" value="UniProtKB-SubCell"/>
</dbReference>
<dbReference type="GO" id="GO:0052914">
    <property type="term" value="F:16S rRNA (guanine(1207)-N(2))-methyltransferase activity"/>
    <property type="evidence" value="ECO:0007669"/>
    <property type="project" value="UniProtKB-EC"/>
</dbReference>
<dbReference type="GO" id="GO:0003676">
    <property type="term" value="F:nucleic acid binding"/>
    <property type="evidence" value="ECO:0007669"/>
    <property type="project" value="InterPro"/>
</dbReference>
<dbReference type="CDD" id="cd02440">
    <property type="entry name" value="AdoMet_MTases"/>
    <property type="match status" value="1"/>
</dbReference>
<dbReference type="Gene3D" id="3.40.50.150">
    <property type="entry name" value="Vaccinia Virus protein VP39"/>
    <property type="match status" value="2"/>
</dbReference>
<dbReference type="HAMAP" id="MF_01862">
    <property type="entry name" value="16SrRNA_methyltr_C"/>
    <property type="match status" value="1"/>
</dbReference>
<dbReference type="InterPro" id="IPR002052">
    <property type="entry name" value="DNA_methylase_N6_adenine_CS"/>
</dbReference>
<dbReference type="InterPro" id="IPR013675">
    <property type="entry name" value="Mtase_sm_N"/>
</dbReference>
<dbReference type="InterPro" id="IPR023543">
    <property type="entry name" value="rRNA_ssu_MeTfrase_C"/>
</dbReference>
<dbReference type="InterPro" id="IPR046977">
    <property type="entry name" value="RsmC/RlmG"/>
</dbReference>
<dbReference type="InterPro" id="IPR029063">
    <property type="entry name" value="SAM-dependent_MTases_sf"/>
</dbReference>
<dbReference type="InterPro" id="IPR007848">
    <property type="entry name" value="Small_mtfrase_dom"/>
</dbReference>
<dbReference type="NCBIfam" id="NF007023">
    <property type="entry name" value="PRK09489.1"/>
    <property type="match status" value="1"/>
</dbReference>
<dbReference type="PANTHER" id="PTHR47816">
    <property type="entry name" value="RIBOSOMAL RNA SMALL SUBUNIT METHYLTRANSFERASE C"/>
    <property type="match status" value="1"/>
</dbReference>
<dbReference type="PANTHER" id="PTHR47816:SF4">
    <property type="entry name" value="RIBOSOMAL RNA SMALL SUBUNIT METHYLTRANSFERASE C"/>
    <property type="match status" value="1"/>
</dbReference>
<dbReference type="Pfam" id="PF05175">
    <property type="entry name" value="MTS"/>
    <property type="match status" value="1"/>
</dbReference>
<dbReference type="Pfam" id="PF08468">
    <property type="entry name" value="MTS_N"/>
    <property type="match status" value="1"/>
</dbReference>
<dbReference type="SUPFAM" id="SSF53335">
    <property type="entry name" value="S-adenosyl-L-methionine-dependent methyltransferases"/>
    <property type="match status" value="1"/>
</dbReference>
<protein>
    <recommendedName>
        <fullName evidence="1">Ribosomal RNA small subunit methyltransferase C</fullName>
        <ecNumber evidence="1">2.1.1.172</ecNumber>
    </recommendedName>
    <alternativeName>
        <fullName evidence="1">16S rRNA m2G1207 methyltransferase</fullName>
    </alternativeName>
    <alternativeName>
        <fullName evidence="1">rRNA (guanine-N(2)-)-methyltransferase RsmC</fullName>
    </alternativeName>
</protein>
<gene>
    <name evidence="1" type="primary">rsmC</name>
    <name type="ordered locus">APL_2005</name>
</gene>
<keyword id="KW-0963">Cytoplasm</keyword>
<keyword id="KW-0489">Methyltransferase</keyword>
<keyword id="KW-1185">Reference proteome</keyword>
<keyword id="KW-0698">rRNA processing</keyword>
<keyword id="KW-0949">S-adenosyl-L-methionine</keyword>
<keyword id="KW-0808">Transferase</keyword>
<name>RSMC_ACTP2</name>
<evidence type="ECO:0000255" key="1">
    <source>
        <dbReference type="HAMAP-Rule" id="MF_01862"/>
    </source>
</evidence>
<feature type="chain" id="PRO_0000369682" description="Ribosomal RNA small subunit methyltransferase C">
    <location>
        <begin position="1"/>
        <end position="329"/>
    </location>
</feature>
<sequence>MLSLESEVLTRHLPLFANKSILLFGDVRDRFADQIKANAKSVAVFSSYFDYARQYADVSFGLYCEIKAELAVFYWTKNKQECQYQLLQWLSQVDVGQEMLIIGENRAGVRSVEKLLEPYGNIAKIDSARRCGLYHFELQSVPDFDGKKFWKSYRLQDLNIFALPAVFSSAELDGGTQLLLSTFNKADRLKGKVLDLGCGAGVIGASLKQQFEKIKLTMSDIHAMALESSRRTFAENALDGTVVASDVFSNIEERFDLIVSNPPFHDGIDTAYRAVEDLIAQAKQRLNRGGELRIVANAFLPYPDLLDKAFGSHQVIAKSNKFKVYSAKA</sequence>
<organism>
    <name type="scientific">Actinobacillus pleuropneumoniae serotype 5b (strain L20)</name>
    <dbReference type="NCBI Taxonomy" id="416269"/>
    <lineage>
        <taxon>Bacteria</taxon>
        <taxon>Pseudomonadati</taxon>
        <taxon>Pseudomonadota</taxon>
        <taxon>Gammaproteobacteria</taxon>
        <taxon>Pasteurellales</taxon>
        <taxon>Pasteurellaceae</taxon>
        <taxon>Actinobacillus</taxon>
    </lineage>
</organism>